<accession>Q4L3Q9</accession>
<gene>
    <name type="ordered locus">SH2409</name>
</gene>
<dbReference type="EMBL" id="AP006716">
    <property type="protein sequence ID" value="BAE05718.1"/>
    <property type="status" value="ALT_INIT"/>
    <property type="molecule type" value="Genomic_DNA"/>
</dbReference>
<dbReference type="SMR" id="Q4L3Q9"/>
<dbReference type="KEGG" id="sha:SH2409"/>
<dbReference type="eggNOG" id="COG2363">
    <property type="taxonomic scope" value="Bacteria"/>
</dbReference>
<dbReference type="HOGENOM" id="CLU_096548_3_3_9"/>
<dbReference type="Proteomes" id="UP000000543">
    <property type="component" value="Chromosome"/>
</dbReference>
<dbReference type="GO" id="GO:0005886">
    <property type="term" value="C:plasma membrane"/>
    <property type="evidence" value="ECO:0007669"/>
    <property type="project" value="UniProtKB-SubCell"/>
</dbReference>
<dbReference type="InterPro" id="IPR006696">
    <property type="entry name" value="DUF423"/>
</dbReference>
<dbReference type="PANTHER" id="PTHR43461">
    <property type="entry name" value="TRANSMEMBRANE PROTEIN 256"/>
    <property type="match status" value="1"/>
</dbReference>
<dbReference type="PANTHER" id="PTHR43461:SF1">
    <property type="entry name" value="TRANSMEMBRANE PROTEIN 256"/>
    <property type="match status" value="1"/>
</dbReference>
<dbReference type="Pfam" id="PF04241">
    <property type="entry name" value="DUF423"/>
    <property type="match status" value="1"/>
</dbReference>
<feature type="chain" id="PRO_0000249040" description="UPF0382 membrane protein SH2409">
    <location>
        <begin position="1"/>
        <end position="122"/>
    </location>
</feature>
<feature type="transmembrane region" description="Helical" evidence="1">
    <location>
        <begin position="3"/>
        <end position="23"/>
    </location>
</feature>
<feature type="transmembrane region" description="Helical" evidence="1">
    <location>
        <begin position="46"/>
        <end position="66"/>
    </location>
</feature>
<feature type="transmembrane region" description="Helical" evidence="1">
    <location>
        <begin position="69"/>
        <end position="89"/>
    </location>
</feature>
<feature type="transmembrane region" description="Helical" evidence="1">
    <location>
        <begin position="98"/>
        <end position="118"/>
    </location>
</feature>
<name>Y2409_STAHJ</name>
<evidence type="ECO:0000255" key="1"/>
<evidence type="ECO:0000305" key="2"/>
<sequence>MKLFIILGALCTMMSVGTGAFGAHGLEGKLSDKYMSVWEKAVNYQMYHGLGLIIIGVISGTTSINVNWAGWLLFLGVVFFSGSLYILALTQIRILGAITPIGGLLFIAGWLMLIISTFKFVG</sequence>
<comment type="subcellular location">
    <subcellularLocation>
        <location evidence="2">Cell membrane</location>
        <topology evidence="2">Multi-pass membrane protein</topology>
    </subcellularLocation>
</comment>
<comment type="similarity">
    <text evidence="2">Belongs to the UPF0382 family.</text>
</comment>
<comment type="sequence caution" evidence="2">
    <conflict type="erroneous initiation">
        <sequence resource="EMBL-CDS" id="BAE05718"/>
    </conflict>
</comment>
<protein>
    <recommendedName>
        <fullName>UPF0382 membrane protein SH2409</fullName>
    </recommendedName>
</protein>
<keyword id="KW-1003">Cell membrane</keyword>
<keyword id="KW-0472">Membrane</keyword>
<keyword id="KW-0812">Transmembrane</keyword>
<keyword id="KW-1133">Transmembrane helix</keyword>
<reference key="1">
    <citation type="journal article" date="2005" name="J. Bacteriol.">
        <title>Whole-genome sequencing of Staphylococcus haemolyticus uncovers the extreme plasticity of its genome and the evolution of human-colonizing staphylococcal species.</title>
        <authorList>
            <person name="Takeuchi F."/>
            <person name="Watanabe S."/>
            <person name="Baba T."/>
            <person name="Yuzawa H."/>
            <person name="Ito T."/>
            <person name="Morimoto Y."/>
            <person name="Kuroda M."/>
            <person name="Cui L."/>
            <person name="Takahashi M."/>
            <person name="Ankai A."/>
            <person name="Baba S."/>
            <person name="Fukui S."/>
            <person name="Lee J.C."/>
            <person name="Hiramatsu K."/>
        </authorList>
    </citation>
    <scope>NUCLEOTIDE SEQUENCE [LARGE SCALE GENOMIC DNA]</scope>
    <source>
        <strain>JCSC1435</strain>
    </source>
</reference>
<organism>
    <name type="scientific">Staphylococcus haemolyticus (strain JCSC1435)</name>
    <dbReference type="NCBI Taxonomy" id="279808"/>
    <lineage>
        <taxon>Bacteria</taxon>
        <taxon>Bacillati</taxon>
        <taxon>Bacillota</taxon>
        <taxon>Bacilli</taxon>
        <taxon>Bacillales</taxon>
        <taxon>Staphylococcaceae</taxon>
        <taxon>Staphylococcus</taxon>
    </lineage>
</organism>
<proteinExistence type="inferred from homology"/>